<organism>
    <name type="scientific">Salmonella typhimurium (strain LT2 / SGSC1412 / ATCC 700720)</name>
    <dbReference type="NCBI Taxonomy" id="99287"/>
    <lineage>
        <taxon>Bacteria</taxon>
        <taxon>Pseudomonadati</taxon>
        <taxon>Pseudomonadota</taxon>
        <taxon>Gammaproteobacteria</taxon>
        <taxon>Enterobacterales</taxon>
        <taxon>Enterobacteriaceae</taxon>
        <taxon>Salmonella</taxon>
    </lineage>
</organism>
<accession>P26389</accession>
<name>WCAM_SALTY</name>
<dbReference type="EMBL" id="X56793">
    <property type="protein sequence ID" value="CAA40113.1"/>
    <property type="molecule type" value="Genomic_DNA"/>
</dbReference>
<dbReference type="EMBL" id="AE006468">
    <property type="protein sequence ID" value="AAL21003.1"/>
    <property type="molecule type" value="Genomic_DNA"/>
</dbReference>
<dbReference type="PIR" id="S15297">
    <property type="entry name" value="S15297"/>
</dbReference>
<dbReference type="RefSeq" id="NP_461044.1">
    <property type="nucleotide sequence ID" value="NC_003197.2"/>
</dbReference>
<dbReference type="RefSeq" id="WP_001111841.1">
    <property type="nucleotide sequence ID" value="NC_003197.2"/>
</dbReference>
<dbReference type="SMR" id="P26389"/>
<dbReference type="STRING" id="99287.STM2099"/>
<dbReference type="PaxDb" id="99287-STM2099"/>
<dbReference type="GeneID" id="1253620"/>
<dbReference type="KEGG" id="stm:STM2099"/>
<dbReference type="PATRIC" id="fig|99287.12.peg.2221"/>
<dbReference type="HOGENOM" id="CLU_046699_0_0_6"/>
<dbReference type="OMA" id="TYDNAYP"/>
<dbReference type="PhylomeDB" id="P26389"/>
<dbReference type="BioCyc" id="SENT99287:STM2099-MONOMER"/>
<dbReference type="UniPathway" id="UPA00936"/>
<dbReference type="Proteomes" id="UP000001014">
    <property type="component" value="Chromosome"/>
</dbReference>
<dbReference type="GO" id="GO:0009103">
    <property type="term" value="P:lipopolysaccharide biosynthetic process"/>
    <property type="evidence" value="ECO:0007669"/>
    <property type="project" value="UniProtKB-KW"/>
</dbReference>
<dbReference type="GO" id="GO:0045228">
    <property type="term" value="P:slime layer polysaccharide biosynthetic process"/>
    <property type="evidence" value="ECO:0007669"/>
    <property type="project" value="UniProtKB-UniPathway"/>
</dbReference>
<dbReference type="Gene3D" id="2.160.20.10">
    <property type="entry name" value="Single-stranded right-handed beta-helix, Pectin lyase-like"/>
    <property type="match status" value="1"/>
</dbReference>
<dbReference type="InterPro" id="IPR023882">
    <property type="entry name" value="Colanic_acid_synth_WcaM"/>
</dbReference>
<dbReference type="InterPro" id="IPR012334">
    <property type="entry name" value="Pectin_lyas_fold"/>
</dbReference>
<dbReference type="InterPro" id="IPR011050">
    <property type="entry name" value="Pectin_lyase_fold/virulence"/>
</dbReference>
<dbReference type="InterPro" id="IPR006311">
    <property type="entry name" value="TAT_signal"/>
</dbReference>
<dbReference type="NCBIfam" id="NF007517">
    <property type="entry name" value="PRK10123.1"/>
    <property type="match status" value="1"/>
</dbReference>
<dbReference type="NCBIfam" id="TIGR04004">
    <property type="entry name" value="WcaM"/>
    <property type="match status" value="1"/>
</dbReference>
<dbReference type="SUPFAM" id="SSF51126">
    <property type="entry name" value="Pectin lyase-like"/>
    <property type="match status" value="1"/>
</dbReference>
<dbReference type="PROSITE" id="PS51318">
    <property type="entry name" value="TAT"/>
    <property type="match status" value="1"/>
</dbReference>
<comment type="pathway">
    <text>Slime biogenesis; slime polysaccharide biosynthesis.</text>
</comment>
<gene>
    <name type="primary">wcaM</name>
    <name type="ordered locus">STM2099</name>
</gene>
<keyword id="KW-0448">Lipopolysaccharide biosynthesis</keyword>
<keyword id="KW-1185">Reference proteome</keyword>
<feature type="chain" id="PRO_0000065959" description="Colanic acid biosynthesis protein WcaM">
    <location>
        <begin position="1"/>
        <end position="467"/>
    </location>
</feature>
<protein>
    <recommendedName>
        <fullName>Colanic acid biosynthesis protein WcaM</fullName>
    </recommendedName>
</protein>
<reference key="1">
    <citation type="journal article" date="1991" name="Mol. Microbiol.">
        <title>Structure and sequence of the rfb (O antigen) gene cluster of Salmonella serovar typhimurium (strain LT2).</title>
        <authorList>
            <person name="Jiang X.-M."/>
            <person name="Neal B."/>
            <person name="Santiago F."/>
            <person name="Lee S.J."/>
            <person name="Romana L.K."/>
            <person name="Reeves P.R."/>
        </authorList>
    </citation>
    <scope>NUCLEOTIDE SEQUENCE [GENOMIC DNA]</scope>
    <source>
        <strain>LT2</strain>
    </source>
</reference>
<reference key="2">
    <citation type="journal article" date="2001" name="Nature">
        <title>Complete genome sequence of Salmonella enterica serovar Typhimurium LT2.</title>
        <authorList>
            <person name="McClelland M."/>
            <person name="Sanderson K.E."/>
            <person name="Spieth J."/>
            <person name="Clifton S.W."/>
            <person name="Latreille P."/>
            <person name="Courtney L."/>
            <person name="Porwollik S."/>
            <person name="Ali J."/>
            <person name="Dante M."/>
            <person name="Du F."/>
            <person name="Hou S."/>
            <person name="Layman D."/>
            <person name="Leonard S."/>
            <person name="Nguyen C."/>
            <person name="Scott K."/>
            <person name="Holmes A."/>
            <person name="Grewal N."/>
            <person name="Mulvaney E."/>
            <person name="Ryan E."/>
            <person name="Sun H."/>
            <person name="Florea L."/>
            <person name="Miller W."/>
            <person name="Stoneking T."/>
            <person name="Nhan M."/>
            <person name="Waterston R."/>
            <person name="Wilson R.K."/>
        </authorList>
    </citation>
    <scope>NUCLEOTIDE SEQUENCE [LARGE SCALE GENOMIC DNA]</scope>
    <source>
        <strain>LT2 / SGSC1412 / ATCC 700720</strain>
    </source>
</reference>
<sequence>MPATKFSRRTLLTAGSALAVLPFLRALPVQAREPRETVDIKDYPADDGIASFKQAFADGQTVVVPPGWVCENINAAITIPAGKTLRVQGAVRGNGRGRFILQDGCQVVGEQGGSLHNVTLDVRGSDCVIKGVAMSGFGPVAQIFIGGKEPQVMRNLIIDDITVTHANYAILRQGFHNQMDGARITHSRFSDLQGDAIEWNVAIHDRDILISDHVIERINCTNGKINWGIGIGLAGSTYDNSYPEDQAVKNFVVANITGSDCRQLVHVENGKHFVIRNVKAKNITPGFSKNAGIDNATIAIYGCDNFVIDNIDMTNSAGMLIGYGVVKGKYLSIPQNFKLNAIRLDNRQVAYKLRGIQISSGNTPSFVAITNVRMTRATLELHNQPQHLFLRNINVMQTSAIGPALKMHFDLRKDVRGQFMARQDTLLSLANVHAINENGQSSVDIDRINHQTVNVEAVNFSLPKRGG</sequence>
<proteinExistence type="predicted"/>